<feature type="chain" id="PRO_0000321253" description="Ribosome-binding factor A">
    <location>
        <begin position="1"/>
        <end position="157"/>
    </location>
</feature>
<feature type="region of interest" description="Disordered" evidence="2">
    <location>
        <begin position="127"/>
        <end position="157"/>
    </location>
</feature>
<feature type="compositionally biased region" description="Acidic residues" evidence="2">
    <location>
        <begin position="135"/>
        <end position="157"/>
    </location>
</feature>
<name>RBFA_SHEB5</name>
<keyword id="KW-0963">Cytoplasm</keyword>
<keyword id="KW-1185">Reference proteome</keyword>
<keyword id="KW-0690">Ribosome biogenesis</keyword>
<proteinExistence type="inferred from homology"/>
<sequence length="157" mass="17851">MVRNIMAKEFSRTRRIAQQLQQELAQVLQRDMKDPRIGFVTVNDVDVSRDLSYAKVFVTFFEEDKAVVQEKLNALISAAPYIRTLVAGRMKLRVMPELRFIYDSSLVEGMRMSNLVSQVINQDKAKQQQFGSEDASVEDEVLGDDVADDADETEGKD</sequence>
<reference key="1">
    <citation type="submission" date="2007-02" db="EMBL/GenBank/DDBJ databases">
        <title>Complete sequence of chromosome of Shewanella baltica OS155.</title>
        <authorList>
            <consortium name="US DOE Joint Genome Institute"/>
            <person name="Copeland A."/>
            <person name="Lucas S."/>
            <person name="Lapidus A."/>
            <person name="Barry K."/>
            <person name="Detter J.C."/>
            <person name="Glavina del Rio T."/>
            <person name="Hammon N."/>
            <person name="Israni S."/>
            <person name="Dalin E."/>
            <person name="Tice H."/>
            <person name="Pitluck S."/>
            <person name="Sims D.R."/>
            <person name="Brettin T."/>
            <person name="Bruce D."/>
            <person name="Han C."/>
            <person name="Tapia R."/>
            <person name="Brainard J."/>
            <person name="Schmutz J."/>
            <person name="Larimer F."/>
            <person name="Land M."/>
            <person name="Hauser L."/>
            <person name="Kyrpides N."/>
            <person name="Mikhailova N."/>
            <person name="Brettar I."/>
            <person name="Klappenbach J."/>
            <person name="Konstantinidis K."/>
            <person name="Rodrigues J."/>
            <person name="Tiedje J."/>
            <person name="Richardson P."/>
        </authorList>
    </citation>
    <scope>NUCLEOTIDE SEQUENCE [LARGE SCALE GENOMIC DNA]</scope>
    <source>
        <strain>OS155 / ATCC BAA-1091</strain>
    </source>
</reference>
<accession>A3D7K5</accession>
<organism>
    <name type="scientific">Shewanella baltica (strain OS155 / ATCC BAA-1091)</name>
    <dbReference type="NCBI Taxonomy" id="325240"/>
    <lineage>
        <taxon>Bacteria</taxon>
        <taxon>Pseudomonadati</taxon>
        <taxon>Pseudomonadota</taxon>
        <taxon>Gammaproteobacteria</taxon>
        <taxon>Alteromonadales</taxon>
        <taxon>Shewanellaceae</taxon>
        <taxon>Shewanella</taxon>
    </lineage>
</organism>
<comment type="function">
    <text evidence="1">One of several proteins that assist in the late maturation steps of the functional core of the 30S ribosomal subunit. Associates with free 30S ribosomal subunits (but not with 30S subunits that are part of 70S ribosomes or polysomes). Required for efficient processing of 16S rRNA. May interact with the 5'-terminal helix region of 16S rRNA.</text>
</comment>
<comment type="subunit">
    <text evidence="1">Monomer. Binds 30S ribosomal subunits, but not 50S ribosomal subunits or 70S ribosomes.</text>
</comment>
<comment type="subcellular location">
    <subcellularLocation>
        <location evidence="1">Cytoplasm</location>
    </subcellularLocation>
</comment>
<comment type="similarity">
    <text evidence="1">Belongs to the RbfA family.</text>
</comment>
<gene>
    <name evidence="1" type="primary">rbfA</name>
    <name type="ordered locus">Sbal_3238</name>
</gene>
<protein>
    <recommendedName>
        <fullName evidence="1">Ribosome-binding factor A</fullName>
    </recommendedName>
</protein>
<evidence type="ECO:0000255" key="1">
    <source>
        <dbReference type="HAMAP-Rule" id="MF_00003"/>
    </source>
</evidence>
<evidence type="ECO:0000256" key="2">
    <source>
        <dbReference type="SAM" id="MobiDB-lite"/>
    </source>
</evidence>
<dbReference type="EMBL" id="CP000563">
    <property type="protein sequence ID" value="ABN62718.1"/>
    <property type="molecule type" value="Genomic_DNA"/>
</dbReference>
<dbReference type="SMR" id="A3D7K5"/>
<dbReference type="STRING" id="325240.Sbal_3238"/>
<dbReference type="KEGG" id="sbl:Sbal_3238"/>
<dbReference type="HOGENOM" id="CLU_089475_5_0_6"/>
<dbReference type="Proteomes" id="UP000001557">
    <property type="component" value="Chromosome"/>
</dbReference>
<dbReference type="GO" id="GO:0005829">
    <property type="term" value="C:cytosol"/>
    <property type="evidence" value="ECO:0007669"/>
    <property type="project" value="TreeGrafter"/>
</dbReference>
<dbReference type="GO" id="GO:0043024">
    <property type="term" value="F:ribosomal small subunit binding"/>
    <property type="evidence" value="ECO:0007669"/>
    <property type="project" value="TreeGrafter"/>
</dbReference>
<dbReference type="GO" id="GO:0030490">
    <property type="term" value="P:maturation of SSU-rRNA"/>
    <property type="evidence" value="ECO:0007669"/>
    <property type="project" value="UniProtKB-UniRule"/>
</dbReference>
<dbReference type="FunFam" id="3.30.300.20:FF:000007">
    <property type="entry name" value="Ribosome-binding factor A"/>
    <property type="match status" value="1"/>
</dbReference>
<dbReference type="Gene3D" id="3.30.300.20">
    <property type="match status" value="1"/>
</dbReference>
<dbReference type="HAMAP" id="MF_00003">
    <property type="entry name" value="RbfA"/>
    <property type="match status" value="1"/>
</dbReference>
<dbReference type="InterPro" id="IPR015946">
    <property type="entry name" value="KH_dom-like_a/b"/>
</dbReference>
<dbReference type="InterPro" id="IPR000238">
    <property type="entry name" value="RbfA"/>
</dbReference>
<dbReference type="InterPro" id="IPR023799">
    <property type="entry name" value="RbfA_dom_sf"/>
</dbReference>
<dbReference type="InterPro" id="IPR020053">
    <property type="entry name" value="Ribosome-bd_factorA_CS"/>
</dbReference>
<dbReference type="NCBIfam" id="TIGR00082">
    <property type="entry name" value="rbfA"/>
    <property type="match status" value="1"/>
</dbReference>
<dbReference type="PANTHER" id="PTHR33515">
    <property type="entry name" value="RIBOSOME-BINDING FACTOR A, CHLOROPLASTIC-RELATED"/>
    <property type="match status" value="1"/>
</dbReference>
<dbReference type="PANTHER" id="PTHR33515:SF1">
    <property type="entry name" value="RIBOSOME-BINDING FACTOR A, CHLOROPLASTIC-RELATED"/>
    <property type="match status" value="1"/>
</dbReference>
<dbReference type="Pfam" id="PF02033">
    <property type="entry name" value="RBFA"/>
    <property type="match status" value="1"/>
</dbReference>
<dbReference type="SUPFAM" id="SSF89919">
    <property type="entry name" value="Ribosome-binding factor A, RbfA"/>
    <property type="match status" value="1"/>
</dbReference>
<dbReference type="PROSITE" id="PS01319">
    <property type="entry name" value="RBFA"/>
    <property type="match status" value="1"/>
</dbReference>